<organism>
    <name type="scientific">Homo sapiens</name>
    <name type="common">Human</name>
    <dbReference type="NCBI Taxonomy" id="9606"/>
    <lineage>
        <taxon>Eukaryota</taxon>
        <taxon>Metazoa</taxon>
        <taxon>Chordata</taxon>
        <taxon>Craniata</taxon>
        <taxon>Vertebrata</taxon>
        <taxon>Euteleostomi</taxon>
        <taxon>Mammalia</taxon>
        <taxon>Eutheria</taxon>
        <taxon>Euarchontoglires</taxon>
        <taxon>Primates</taxon>
        <taxon>Haplorrhini</taxon>
        <taxon>Catarrhini</taxon>
        <taxon>Hominidae</taxon>
        <taxon>Homo</taxon>
    </lineage>
</organism>
<name>ERR1_HUMAN</name>
<feature type="chain" id="PRO_0000053660" description="Steroid hormone receptor ERR1">
    <location>
        <begin position="1"/>
        <end position="423"/>
    </location>
</feature>
<feature type="domain" description="NR LBD" evidence="2">
    <location>
        <begin position="193"/>
        <end position="421"/>
    </location>
</feature>
<feature type="DNA-binding region" description="Nuclear receptor" evidence="1">
    <location>
        <begin position="76"/>
        <end position="151"/>
    </location>
</feature>
<feature type="zinc finger region" description="NR C4-type" evidence="1">
    <location>
        <begin position="79"/>
        <end position="99"/>
    </location>
</feature>
<feature type="zinc finger region" description="NR C4-type" evidence="1">
    <location>
        <begin position="115"/>
        <end position="134"/>
    </location>
</feature>
<feature type="region of interest" description="Repressor domain">
    <location>
        <begin position="1"/>
        <end position="76"/>
    </location>
</feature>
<feature type="region of interest" description="Disordered" evidence="3">
    <location>
        <begin position="1"/>
        <end position="67"/>
    </location>
</feature>
<feature type="region of interest" description="AF-2 domain">
    <location>
        <begin position="403"/>
        <end position="423"/>
    </location>
</feature>
<feature type="compositionally biased region" description="Gly residues" evidence="3">
    <location>
        <begin position="58"/>
        <end position="67"/>
    </location>
</feature>
<feature type="site" description="Required for DNA-dependent dimerization">
    <location>
        <position position="124"/>
    </location>
</feature>
<feature type="modified residue" description="Phosphoserine" evidence="7 8 16">
    <location>
        <position position="19"/>
    </location>
</feature>
<feature type="modified residue" description="Phosphoserine" evidence="7 8 16">
    <location>
        <position position="22"/>
    </location>
</feature>
<feature type="modified residue" description="N6-acetyllysine; by PCAF/KAT2B" evidence="10">
    <location>
        <position position="129"/>
    </location>
</feature>
<feature type="modified residue" description="N6-acetyllysine; by PCAF/KAT2B" evidence="10">
    <location>
        <position position="138"/>
    </location>
</feature>
<feature type="modified residue" description="N6-acetyllysine; by PCAF/KAT2B" evidence="10">
    <location>
        <position position="160"/>
    </location>
</feature>
<feature type="modified residue" description="N6-acetyllysine; by PCAF/KAT2B" evidence="10">
    <location>
        <position position="162"/>
    </location>
</feature>
<feature type="cross-link" description="Glycyl lysine isopeptide (Lys-Gly) (interchain with G-Cter in SUMO)" evidence="7 8">
    <location>
        <position position="14"/>
    </location>
</feature>
<feature type="cross-link" description="Glycyl lysine isopeptide (Lys-Gly) (interchain with G-Cter in SUMO2)" evidence="18 19">
    <location>
        <position position="189"/>
    </location>
</feature>
<feature type="cross-link" description="Glycyl lysine isopeptide (Lys-Gly) (interchain with G-Cter in SUMO); alternate" evidence="7 8">
    <location>
        <position position="403"/>
    </location>
</feature>
<feature type="cross-link" description="Glycyl lysine isopeptide (Lys-Gly) (interchain with G-Cter in SUMO2); alternate" evidence="17 18 19">
    <location>
        <position position="403"/>
    </location>
</feature>
<feature type="splice variant" id="VSP_035756" description="In isoform 2." evidence="14">
    <location>
        <position position="191"/>
    </location>
</feature>
<feature type="mutagenesis site" description="Some loss of sumoylation. Complete loss of sumoylation; when associated with R-403." evidence="7 8">
    <original>K</original>
    <variation>R</variation>
    <location>
        <position position="14"/>
    </location>
</feature>
<feature type="mutagenesis site" description="50% loss of phosphorylation but represses transactivation activity in the absence of coactivator. Almost complete loss of phosphorylation and 2-fold loss of repression of transactivation activity in response to coactivator; when associated with A-22." evidence="7 8">
    <original>S</original>
    <variation>A</variation>
    <location>
        <position position="19"/>
    </location>
</feature>
<feature type="mutagenesis site" description="Represses transactivation activity in response to coactivator as for wild type; when associated with D-22." evidence="7 8">
    <original>S</original>
    <variation>D</variation>
    <location>
        <position position="19"/>
    </location>
</feature>
<feature type="mutagenesis site" description="15% loss of phosphorylation but little transactivating activity. Almost complete loss of phosphorylation and 2-fold loss of repression of transactivation activity in the presence of coactivator; when associated with A-19." evidence="7 8">
    <original>S</original>
    <variation>A</variation>
    <location>
        <position position="22"/>
    </location>
</feature>
<feature type="mutagenesis site" description="Represses transactivation activity in response to coactivator as for wild type; when associated with D-19." evidence="7 8">
    <original>S</original>
    <variation>D</variation>
    <location>
        <position position="22"/>
    </location>
</feature>
<feature type="mutagenesis site" description="Binds DNA as a monomer or as a dimer as for wild type. No effect on interaction with PPARGC1A." evidence="6">
    <original>S</original>
    <variation>A</variation>
    <location>
        <position position="118"/>
    </location>
</feature>
<feature type="mutagenesis site" description="Binds DNA predominantly as a monomer. Loss of interaction with PPARGC1A." evidence="6">
    <original>T</original>
    <variation>A</variation>
    <location>
        <position position="124"/>
    </location>
</feature>
<feature type="mutagenesis site" description="Abolishes acetylation by PCAF/KAT2B; when associated with R-138, R-160 and R-162." evidence="10">
    <original>K</original>
    <variation>R</variation>
    <location>
        <position position="129"/>
    </location>
</feature>
<feature type="mutagenesis site" description="Abolishes acetylation by PCAF/KAT2B; when associated with R-129, R-160 and R-162." evidence="10">
    <original>K</original>
    <variation>R</variation>
    <location>
        <position position="138"/>
    </location>
</feature>
<feature type="mutagenesis site" description="Abolishes acetylation by PCAF/KAT2B; when associated with R-129, R-138 and R-162." evidence="10">
    <original>K</original>
    <variation>R</variation>
    <location>
        <position position="160"/>
    </location>
</feature>
<feature type="mutagenesis site" description="Abolishes acetylation by PCAF/KAT2B; when associated with R-129, R-138 and R-160." evidence="10">
    <original>K</original>
    <variation>R</variation>
    <location>
        <position position="162"/>
    </location>
</feature>
<feature type="mutagenesis site" description="Almost complete loss of interaction to L2 or to L3 of PPARGC1A." evidence="9">
    <original>MSVLQ</original>
    <variation>VSVLE</variation>
    <location>
        <begin position="258"/>
        <end position="262"/>
    </location>
</feature>
<feature type="mutagenesis site" description="Little effect on binding L2 of PPARGC1A. Greatly reduced binding to L3 of PPARGC1A." evidence="9">
    <original>S</original>
    <variation>H</variation>
    <location>
        <position position="259"/>
    </location>
</feature>
<feature type="mutagenesis site" description="Almost complete loss of interaction to L2 or to L3 of PPARGC1A." evidence="9">
    <original>R</original>
    <variation>A</variation>
    <location>
        <position position="315"/>
    </location>
</feature>
<feature type="mutagenesis site" description="Almost complete loss of interaction to L2 or to L3 of PPARGC1A." evidence="9">
    <original>D</original>
    <variation>A</variation>
    <location>
        <position position="338"/>
    </location>
</feature>
<feature type="mutagenesis site" description="Little effect on binding L3 of PPARGC1A." evidence="9">
    <original>H</original>
    <variation>A</variation>
    <location>
        <position position="341"/>
    </location>
</feature>
<feature type="mutagenesis site" description="No effect on binding L3 of PPARGC1A." evidence="9">
    <original>E</original>
    <variation>A</variation>
    <location>
        <position position="343"/>
    </location>
</feature>
<feature type="mutagenesis site" description="Decrease in sumoylation. No effect on transcriptional activity. Complete loss of sumoylation; when associated with R-14." evidence="7 8">
    <original>K</original>
    <variation>R</variation>
    <location>
        <position position="403"/>
    </location>
</feature>
<feature type="mutagenesis site" description="Loss of coactivation activity; when associated with A-418. Loss of increased response to coactivator; when associated with A-19 and A-418." evidence="7">
    <original>L</original>
    <variation>A</variation>
    <location>
        <position position="413"/>
    </location>
</feature>
<feature type="mutagenesis site" description="Loss of coactivation activity; when associated with A-413. Loss of increased response to coactivator activity; when associated with A-19 and A-413." evidence="7">
    <original>L</original>
    <variation>A</variation>
    <location>
        <position position="418"/>
    </location>
</feature>
<feature type="mutagenesis site" description="Greatly reduced interaction with L3 motif of PPARGC1A. Less effect on binding to L2 motif of PPARGC1A." evidence="9">
    <location>
        <begin position="421"/>
        <end position="423"/>
    </location>
</feature>
<feature type="mutagenesis site" description="Little effect on binding L3 of PPARGC1A.">
    <original>D</original>
    <variation>A</variation>
    <location>
        <position position="423"/>
    </location>
</feature>
<feature type="helix" evidence="21">
    <location>
        <begin position="195"/>
        <end position="204"/>
    </location>
</feature>
<feature type="helix" evidence="21">
    <location>
        <begin position="224"/>
        <end position="244"/>
    </location>
</feature>
<feature type="helix" evidence="21">
    <location>
        <begin position="249"/>
        <end position="251"/>
    </location>
</feature>
<feature type="helix" evidence="21">
    <location>
        <begin position="254"/>
        <end position="277"/>
    </location>
</feature>
<feature type="strand" evidence="21">
    <location>
        <begin position="280"/>
        <end position="282"/>
    </location>
</feature>
<feature type="strand" evidence="21">
    <location>
        <begin position="284"/>
        <end position="287"/>
    </location>
</feature>
<feature type="strand" evidence="21">
    <location>
        <begin position="290"/>
        <end position="292"/>
    </location>
</feature>
<feature type="helix" evidence="21">
    <location>
        <begin position="294"/>
        <end position="299"/>
    </location>
</feature>
<feature type="turn" evidence="21">
    <location>
        <begin position="300"/>
        <end position="304"/>
    </location>
</feature>
<feature type="helix" evidence="21">
    <location>
        <begin position="305"/>
        <end position="317"/>
    </location>
</feature>
<feature type="turn" evidence="21">
    <location>
        <begin position="318"/>
        <end position="320"/>
    </location>
</feature>
<feature type="helix" evidence="21">
    <location>
        <begin position="323"/>
        <end position="335"/>
    </location>
</feature>
<feature type="helix" evidence="21">
    <location>
        <begin position="345"/>
        <end position="364"/>
    </location>
</feature>
<feature type="helix" evidence="21">
    <location>
        <begin position="377"/>
        <end position="382"/>
    </location>
</feature>
<feature type="helix" evidence="21">
    <location>
        <begin position="385"/>
        <end position="400"/>
    </location>
</feature>
<feature type="helix" evidence="20">
    <location>
        <begin position="404"/>
        <end position="406"/>
    </location>
</feature>
<feature type="helix" evidence="21">
    <location>
        <begin position="410"/>
        <end position="421"/>
    </location>
</feature>
<dbReference type="EMBL" id="X51416">
    <property type="protein sequence ID" value="CAA35778.1"/>
    <property type="status" value="ALT_FRAME"/>
    <property type="molecule type" value="mRNA"/>
</dbReference>
<dbReference type="EMBL" id="L38487">
    <property type="protein sequence ID" value="AAB17015.1"/>
    <property type="status" value="ALT_INIT"/>
    <property type="molecule type" value="mRNA"/>
</dbReference>
<dbReference type="EMBL" id="AP001453">
    <property type="status" value="NOT_ANNOTATED_CDS"/>
    <property type="molecule type" value="Genomic_DNA"/>
</dbReference>
<dbReference type="CCDS" id="CCDS41667.1">
    <molecule id="P11474-1"/>
</dbReference>
<dbReference type="CCDS" id="CCDS60830.1">
    <molecule id="P11474-2"/>
</dbReference>
<dbReference type="PIR" id="A29345">
    <property type="entry name" value="A29345"/>
</dbReference>
<dbReference type="RefSeq" id="NP_001269379.1">
    <molecule id="P11474-1"/>
    <property type="nucleotide sequence ID" value="NM_001282450.2"/>
</dbReference>
<dbReference type="RefSeq" id="NP_001269380.1">
    <molecule id="P11474-2"/>
    <property type="nucleotide sequence ID" value="NM_001282451.2"/>
</dbReference>
<dbReference type="RefSeq" id="NP_004442.3">
    <molecule id="P11474-1"/>
    <property type="nucleotide sequence ID" value="NM_004451.4"/>
</dbReference>
<dbReference type="PDB" id="1XB7">
    <property type="method" value="X-ray"/>
    <property type="resolution" value="2.50 A"/>
    <property type="chains" value="A=194-423"/>
</dbReference>
<dbReference type="PDB" id="2PJL">
    <property type="method" value="X-ray"/>
    <property type="resolution" value="2.30 A"/>
    <property type="chains" value="A/B=193-423"/>
</dbReference>
<dbReference type="PDB" id="3D24">
    <property type="method" value="X-ray"/>
    <property type="resolution" value="2.11 A"/>
    <property type="chains" value="A/C=192-423"/>
</dbReference>
<dbReference type="PDB" id="3K6P">
    <property type="method" value="X-ray"/>
    <property type="resolution" value="2.00 A"/>
    <property type="chains" value="A=193-423"/>
</dbReference>
<dbReference type="PDB" id="7E2E">
    <property type="method" value="X-ray"/>
    <property type="resolution" value="2.70 A"/>
    <property type="chains" value="A/B=194-423"/>
</dbReference>
<dbReference type="PDBsum" id="1XB7"/>
<dbReference type="PDBsum" id="2PJL"/>
<dbReference type="PDBsum" id="3D24"/>
<dbReference type="PDBsum" id="3K6P"/>
<dbReference type="PDBsum" id="7E2E"/>
<dbReference type="SMR" id="P11474"/>
<dbReference type="BioGRID" id="108405">
    <property type="interactions" value="67"/>
</dbReference>
<dbReference type="DIP" id="DIP-35053N"/>
<dbReference type="FunCoup" id="P11474">
    <property type="interactions" value="1111"/>
</dbReference>
<dbReference type="IntAct" id="P11474">
    <property type="interactions" value="38"/>
</dbReference>
<dbReference type="MINT" id="P11474"/>
<dbReference type="STRING" id="9606.ENSP00000384851"/>
<dbReference type="BindingDB" id="P11474"/>
<dbReference type="ChEMBL" id="CHEMBL3429"/>
<dbReference type="DrugBank" id="DB06833">
    <property type="generic name" value="1-CYCLOHEXYL-N-{[1-(4-METHYLPHENYL)-1H-INDOL-3-YL]METHYL}METHANAMINE"/>
</dbReference>
<dbReference type="DrugBank" id="DB04468">
    <property type="generic name" value="Afimoxifene"/>
</dbReference>
<dbReference type="DrugBank" id="DB00288">
    <property type="generic name" value="Amcinonide"/>
</dbReference>
<dbReference type="DrugBank" id="DB00995">
    <property type="generic name" value="Auranofin"/>
</dbReference>
<dbReference type="DrugBank" id="DB06732">
    <property type="generic name" value="beta-Naphthoflavone"/>
</dbReference>
<dbReference type="DrugBank" id="DB15334">
    <property type="generic name" value="Biochanin A"/>
</dbReference>
<dbReference type="DrugBank" id="DB01380">
    <property type="generic name" value="Cortisone acetate"/>
</dbReference>
<dbReference type="DrugBank" id="DB13182">
    <property type="generic name" value="Daidzein"/>
</dbReference>
<dbReference type="DrugBank" id="DB01260">
    <property type="generic name" value="Desonide"/>
</dbReference>
<dbReference type="DrugBank" id="DB00547">
    <property type="generic name" value="Desoximetasone"/>
</dbReference>
<dbReference type="DrugBank" id="DB19168">
    <property type="generic name" value="Dexamethasone palmitate"/>
</dbReference>
<dbReference type="DrugBank" id="DB00255">
    <property type="generic name" value="Diethylstilbestrol"/>
</dbReference>
<dbReference type="DrugBank" id="DB07776">
    <property type="generic name" value="Flavone"/>
</dbReference>
<dbReference type="DrugBank" id="DB00663">
    <property type="generic name" value="Flumethasone"/>
</dbReference>
<dbReference type="DrugBank" id="DB01047">
    <property type="generic name" value="Fluocinonide"/>
</dbReference>
<dbReference type="DrugBank" id="DB00846">
    <property type="generic name" value="Flurandrenolide"/>
</dbReference>
<dbReference type="DrugBank" id="DB01645">
    <property type="generic name" value="Genistein"/>
</dbReference>
<dbReference type="DrugBank" id="DB06786">
    <property type="generic name" value="Halcinonide"/>
</dbReference>
<dbReference type="DrugBank" id="DB14596">
    <property type="generic name" value="Loteprednol etabonate"/>
</dbReference>
<dbReference type="DrugBank" id="DB00253">
    <property type="generic name" value="Medrysone"/>
</dbReference>
<dbReference type="DrugBank" id="DB01130">
    <property type="generic name" value="Prednicarbate"/>
</dbReference>
<dbReference type="DrugBank" id="DB02789">
    <property type="generic name" value="Pregnenolone"/>
</dbReference>
<dbReference type="DrugBank" id="DB00896">
    <property type="generic name" value="Rimexolone"/>
</dbReference>
<dbReference type="DrugBank" id="DB00197">
    <property type="generic name" value="Troglitazone"/>
</dbReference>
<dbReference type="DrugBank" id="DB00596">
    <property type="generic name" value="Ulobetasol"/>
</dbReference>
<dbReference type="DrugCentral" id="P11474"/>
<dbReference type="GuidetoPHARMACOLOGY" id="622"/>
<dbReference type="iPTMnet" id="P11474"/>
<dbReference type="PhosphoSitePlus" id="P11474"/>
<dbReference type="SwissPalm" id="P11474"/>
<dbReference type="BioMuta" id="ESRRA"/>
<dbReference type="DMDM" id="215274146"/>
<dbReference type="jPOST" id="P11474"/>
<dbReference type="MassIVE" id="P11474"/>
<dbReference type="PaxDb" id="9606-ENSP00000384851"/>
<dbReference type="PeptideAtlas" id="P11474"/>
<dbReference type="ProteomicsDB" id="52781">
    <molecule id="P11474-1"/>
</dbReference>
<dbReference type="ProteomicsDB" id="52782">
    <molecule id="P11474-2"/>
</dbReference>
<dbReference type="Pumba" id="P11474"/>
<dbReference type="ABCD" id="P11474">
    <property type="antibodies" value="6 sequenced antibodies"/>
</dbReference>
<dbReference type="Antibodypedia" id="7260">
    <property type="antibodies" value="597 antibodies from 40 providers"/>
</dbReference>
<dbReference type="DNASU" id="2101"/>
<dbReference type="Ensembl" id="ENST00000000442.11">
    <molecule id="P11474-1"/>
    <property type="protein sequence ID" value="ENSP00000000442.6"/>
    <property type="gene ID" value="ENSG00000173153.17"/>
</dbReference>
<dbReference type="Ensembl" id="ENST00000405666.5">
    <molecule id="P11474-1"/>
    <property type="protein sequence ID" value="ENSP00000384851.1"/>
    <property type="gene ID" value="ENSG00000173153.17"/>
</dbReference>
<dbReference type="Ensembl" id="ENST00000677967.1">
    <molecule id="P11474-2"/>
    <property type="protein sequence ID" value="ENSP00000503245.1"/>
    <property type="gene ID" value="ENSG00000173153.17"/>
</dbReference>
<dbReference type="GeneID" id="2101"/>
<dbReference type="KEGG" id="hsa:2101"/>
<dbReference type="MANE-Select" id="ENST00000000442.11">
    <property type="protein sequence ID" value="ENSP00000000442.6"/>
    <property type="RefSeq nucleotide sequence ID" value="NM_004451.5"/>
    <property type="RefSeq protein sequence ID" value="NP_004442.3"/>
</dbReference>
<dbReference type="UCSC" id="uc001nzr.3">
    <molecule id="P11474-1"/>
    <property type="organism name" value="human"/>
</dbReference>
<dbReference type="AGR" id="HGNC:3471"/>
<dbReference type="CTD" id="2101"/>
<dbReference type="DisGeNET" id="2101"/>
<dbReference type="GeneCards" id="ESRRA"/>
<dbReference type="HGNC" id="HGNC:3471">
    <property type="gene designation" value="ESRRA"/>
</dbReference>
<dbReference type="HPA" id="ENSG00000173153">
    <property type="expression patterns" value="Tissue enhanced (skeletal)"/>
</dbReference>
<dbReference type="MalaCards" id="ESRRA"/>
<dbReference type="MIM" id="601998">
    <property type="type" value="gene"/>
</dbReference>
<dbReference type="neXtProt" id="NX_P11474"/>
<dbReference type="OpenTargets" id="ENSG00000173153"/>
<dbReference type="PharmGKB" id="PA27887"/>
<dbReference type="VEuPathDB" id="HostDB:ENSG00000173153"/>
<dbReference type="eggNOG" id="KOG3575">
    <property type="taxonomic scope" value="Eukaryota"/>
</dbReference>
<dbReference type="GeneTree" id="ENSGT00940000160341"/>
<dbReference type="HOGENOM" id="CLU_007368_11_0_1"/>
<dbReference type="InParanoid" id="P11474"/>
<dbReference type="OMA" id="ASNVCEI"/>
<dbReference type="OrthoDB" id="5799427at2759"/>
<dbReference type="PAN-GO" id="P11474">
    <property type="GO annotations" value="3 GO annotations based on evolutionary models"/>
</dbReference>
<dbReference type="PhylomeDB" id="P11474"/>
<dbReference type="TreeFam" id="TF323751"/>
<dbReference type="PathwayCommons" id="P11474"/>
<dbReference type="Reactome" id="R-HSA-1989781">
    <property type="pathway name" value="PPARA activates gene expression"/>
</dbReference>
<dbReference type="Reactome" id="R-HSA-2151201">
    <property type="pathway name" value="Transcriptional activation of mitochondrial biogenesis"/>
</dbReference>
<dbReference type="Reactome" id="R-HSA-383280">
    <property type="pathway name" value="Nuclear Receptor transcription pathway"/>
</dbReference>
<dbReference type="Reactome" id="R-HSA-8939902">
    <property type="pathway name" value="Regulation of RUNX2 expression and activity"/>
</dbReference>
<dbReference type="SignaLink" id="P11474"/>
<dbReference type="SIGNOR" id="P11474"/>
<dbReference type="BioGRID-ORCS" id="2101">
    <property type="hits" value="58 hits in 1181 CRISPR screens"/>
</dbReference>
<dbReference type="ChiTaRS" id="ESRRA">
    <property type="organism name" value="human"/>
</dbReference>
<dbReference type="EvolutionaryTrace" id="P11474"/>
<dbReference type="GeneWiki" id="Estrogen-related_receptor_alpha"/>
<dbReference type="GenomeRNAi" id="2101"/>
<dbReference type="Pharos" id="P11474">
    <property type="development level" value="Tchem"/>
</dbReference>
<dbReference type="PRO" id="PR:P11474"/>
<dbReference type="Proteomes" id="UP000005640">
    <property type="component" value="Chromosome 11"/>
</dbReference>
<dbReference type="RNAct" id="P11474">
    <property type="molecule type" value="protein"/>
</dbReference>
<dbReference type="Bgee" id="ENSG00000173153">
    <property type="expression patterns" value="Expressed in apex of heart and 182 other cell types or tissues"/>
</dbReference>
<dbReference type="ExpressionAtlas" id="P11474">
    <property type="expression patterns" value="baseline and differential"/>
</dbReference>
<dbReference type="GO" id="GO:0000785">
    <property type="term" value="C:chromatin"/>
    <property type="evidence" value="ECO:0000247"/>
    <property type="project" value="NTNU_SB"/>
</dbReference>
<dbReference type="GO" id="GO:0005737">
    <property type="term" value="C:cytoplasm"/>
    <property type="evidence" value="ECO:0000314"/>
    <property type="project" value="UniProtKB"/>
</dbReference>
<dbReference type="GO" id="GO:0001650">
    <property type="term" value="C:fibrillar center"/>
    <property type="evidence" value="ECO:0000314"/>
    <property type="project" value="HPA"/>
</dbReference>
<dbReference type="GO" id="GO:0045171">
    <property type="term" value="C:intercellular bridge"/>
    <property type="evidence" value="ECO:0000314"/>
    <property type="project" value="HPA"/>
</dbReference>
<dbReference type="GO" id="GO:0015630">
    <property type="term" value="C:microtubule cytoskeleton"/>
    <property type="evidence" value="ECO:0000314"/>
    <property type="project" value="HPA"/>
</dbReference>
<dbReference type="GO" id="GO:0005654">
    <property type="term" value="C:nucleoplasm"/>
    <property type="evidence" value="ECO:0000314"/>
    <property type="project" value="HPA"/>
</dbReference>
<dbReference type="GO" id="GO:0005634">
    <property type="term" value="C:nucleus"/>
    <property type="evidence" value="ECO:0000314"/>
    <property type="project" value="UniProtKB"/>
</dbReference>
<dbReference type="GO" id="GO:0001228">
    <property type="term" value="F:DNA-binding transcription activator activity, RNA polymerase II-specific"/>
    <property type="evidence" value="ECO:0007669"/>
    <property type="project" value="Ensembl"/>
</dbReference>
<dbReference type="GO" id="GO:0003700">
    <property type="term" value="F:DNA-binding transcription factor activity"/>
    <property type="evidence" value="ECO:0000314"/>
    <property type="project" value="UniProtKB"/>
</dbReference>
<dbReference type="GO" id="GO:0000981">
    <property type="term" value="F:DNA-binding transcription factor activity, RNA polymerase II-specific"/>
    <property type="evidence" value="ECO:0000247"/>
    <property type="project" value="NTNU_SB"/>
</dbReference>
<dbReference type="GO" id="GO:0001227">
    <property type="term" value="F:DNA-binding transcription repressor activity, RNA polymerase II-specific"/>
    <property type="evidence" value="ECO:0007669"/>
    <property type="project" value="Ensembl"/>
</dbReference>
<dbReference type="GO" id="GO:0034056">
    <property type="term" value="F:estrogen response element binding"/>
    <property type="evidence" value="ECO:0000318"/>
    <property type="project" value="GO_Central"/>
</dbReference>
<dbReference type="GO" id="GO:0004879">
    <property type="term" value="F:nuclear receptor activity"/>
    <property type="evidence" value="ECO:0000318"/>
    <property type="project" value="GO_Central"/>
</dbReference>
<dbReference type="GO" id="GO:0003707">
    <property type="term" value="F:nuclear steroid receptor activity"/>
    <property type="evidence" value="ECO:0007669"/>
    <property type="project" value="InterPro"/>
</dbReference>
<dbReference type="GO" id="GO:0019904">
    <property type="term" value="F:protein domain specific binding"/>
    <property type="evidence" value="ECO:0000353"/>
    <property type="project" value="UniProtKB"/>
</dbReference>
<dbReference type="GO" id="GO:0043565">
    <property type="term" value="F:sequence-specific DNA binding"/>
    <property type="evidence" value="ECO:0000314"/>
    <property type="project" value="UniProtKB"/>
</dbReference>
<dbReference type="GO" id="GO:1990837">
    <property type="term" value="F:sequence-specific double-stranded DNA binding"/>
    <property type="evidence" value="ECO:0000314"/>
    <property type="project" value="ARUK-UCL"/>
</dbReference>
<dbReference type="GO" id="GO:0005496">
    <property type="term" value="F:steroid binding"/>
    <property type="evidence" value="ECO:0007669"/>
    <property type="project" value="InterPro"/>
</dbReference>
<dbReference type="GO" id="GO:0008270">
    <property type="term" value="F:zinc ion binding"/>
    <property type="evidence" value="ECO:0007669"/>
    <property type="project" value="UniProtKB-KW"/>
</dbReference>
<dbReference type="GO" id="GO:0045944">
    <property type="term" value="P:positive regulation of transcription by RNA polymerase II"/>
    <property type="evidence" value="ECO:0000250"/>
    <property type="project" value="BHF-UCL"/>
</dbReference>
<dbReference type="GO" id="GO:0006355">
    <property type="term" value="P:regulation of DNA-templated transcription"/>
    <property type="evidence" value="ECO:0000315"/>
    <property type="project" value="UniProtKB"/>
</dbReference>
<dbReference type="GO" id="GO:0006357">
    <property type="term" value="P:regulation of transcription by RNA polymerase II"/>
    <property type="evidence" value="ECO:0000318"/>
    <property type="project" value="GO_Central"/>
</dbReference>
<dbReference type="CDD" id="cd07170">
    <property type="entry name" value="NR_DBD_ERR"/>
    <property type="match status" value="1"/>
</dbReference>
<dbReference type="CDD" id="cd06946">
    <property type="entry name" value="NR_LBD_ERR"/>
    <property type="match status" value="1"/>
</dbReference>
<dbReference type="FunFam" id="3.30.50.10:FF:000008">
    <property type="entry name" value="estrogen-related receptor gamma isoform X1"/>
    <property type="match status" value="1"/>
</dbReference>
<dbReference type="FunFam" id="1.10.565.10:FF:000023">
    <property type="entry name" value="Steroid hormone receptor ERR1"/>
    <property type="match status" value="1"/>
</dbReference>
<dbReference type="Gene3D" id="3.30.50.10">
    <property type="entry name" value="Erythroid Transcription Factor GATA-1, subunit A"/>
    <property type="match status" value="1"/>
</dbReference>
<dbReference type="Gene3D" id="1.10.565.10">
    <property type="entry name" value="Retinoid X Receptor"/>
    <property type="match status" value="1"/>
</dbReference>
<dbReference type="IDEAL" id="IID00021"/>
<dbReference type="InterPro" id="IPR024178">
    <property type="entry name" value="Est_rcpt/est-rel_rcp"/>
</dbReference>
<dbReference type="InterPro" id="IPR035500">
    <property type="entry name" value="NHR-like_dom_sf"/>
</dbReference>
<dbReference type="InterPro" id="IPR000536">
    <property type="entry name" value="Nucl_hrmn_rcpt_lig-bd"/>
</dbReference>
<dbReference type="InterPro" id="IPR050200">
    <property type="entry name" value="Nuclear_hormone_rcpt_NR3"/>
</dbReference>
<dbReference type="InterPro" id="IPR001723">
    <property type="entry name" value="Nuclear_hrmn_rcpt"/>
</dbReference>
<dbReference type="InterPro" id="IPR027289">
    <property type="entry name" value="Oest-rel_rcp"/>
</dbReference>
<dbReference type="InterPro" id="IPR001628">
    <property type="entry name" value="Znf_hrmn_rcpt"/>
</dbReference>
<dbReference type="InterPro" id="IPR013088">
    <property type="entry name" value="Znf_NHR/GATA"/>
</dbReference>
<dbReference type="PANTHER" id="PTHR48092">
    <property type="entry name" value="KNIRPS-RELATED PROTEIN-RELATED"/>
    <property type="match status" value="1"/>
</dbReference>
<dbReference type="Pfam" id="PF00104">
    <property type="entry name" value="Hormone_recep"/>
    <property type="match status" value="1"/>
</dbReference>
<dbReference type="Pfam" id="PF00105">
    <property type="entry name" value="zf-C4"/>
    <property type="match status" value="1"/>
</dbReference>
<dbReference type="PIRSF" id="PIRSF002527">
    <property type="entry name" value="ER-like_NR"/>
    <property type="match status" value="1"/>
</dbReference>
<dbReference type="PIRSF" id="PIRSF500939">
    <property type="entry name" value="ERR1-2-3"/>
    <property type="match status" value="1"/>
</dbReference>
<dbReference type="PRINTS" id="PR00398">
    <property type="entry name" value="STRDHORMONER"/>
</dbReference>
<dbReference type="PRINTS" id="PR00047">
    <property type="entry name" value="STROIDFINGER"/>
</dbReference>
<dbReference type="SMART" id="SM00430">
    <property type="entry name" value="HOLI"/>
    <property type="match status" value="1"/>
</dbReference>
<dbReference type="SMART" id="SM00399">
    <property type="entry name" value="ZnF_C4"/>
    <property type="match status" value="1"/>
</dbReference>
<dbReference type="SUPFAM" id="SSF57716">
    <property type="entry name" value="Glucocorticoid receptor-like (DNA-binding domain)"/>
    <property type="match status" value="1"/>
</dbReference>
<dbReference type="SUPFAM" id="SSF48508">
    <property type="entry name" value="Nuclear receptor ligand-binding domain"/>
    <property type="match status" value="1"/>
</dbReference>
<dbReference type="PROSITE" id="PS51843">
    <property type="entry name" value="NR_LBD"/>
    <property type="match status" value="1"/>
</dbReference>
<dbReference type="PROSITE" id="PS00031">
    <property type="entry name" value="NUCLEAR_REC_DBD_1"/>
    <property type="match status" value="1"/>
</dbReference>
<dbReference type="PROSITE" id="PS51030">
    <property type="entry name" value="NUCLEAR_REC_DBD_2"/>
    <property type="match status" value="1"/>
</dbReference>
<comment type="function">
    <text evidence="4 6 7 8 12 13">Binds to an ERR-alpha response element (ERRE) containing a single consensus half-site, 5'-TNAAGGTCA-3'. Can bind to the medium-chain acyl coenzyme A dehydrogenase (MCAD) response element NRRE-1 and may act as an important regulator of MCAD promoter. Binds to the C1 region of the lactoferrin gene promoter. Requires dimerization and the coactivator, PGC-1A, for full activity. The ERRalpha/PGC1alpha complex is a regulator of energy metabolism. Induces the expression of PERM1 in the skeletal muscle.</text>
</comment>
<comment type="subunit">
    <text evidence="4 5 6 8 9">Binds DNA as a monomer or a homodimer. Interacts (via the AF2 domain) with coactivator PPARGC1A (via the L3 motif); the interaction greatly enhances transcriptional activity of genes involved in energy metabolism. Interacts with PIAS4; the interaction enhances sumoylation. Interacts with MAPK15; promotes re-localization of ESRRA to the cytoplasm through a XPO1-dependent mechanism then inhibits ESRRA transcriptional activity.</text>
</comment>
<comment type="interaction">
    <interactant intactId="EBI-372412">
        <id>P11474</id>
    </interactant>
    <interactant intactId="EBI-12001340">
        <id>P62508-3</id>
        <label>ESRRG</label>
    </interactant>
    <organismsDiffer>false</organismsDiffer>
    <experiments>3</experiments>
</comment>
<comment type="interaction">
    <interactant intactId="EBI-372412">
        <id>P11474</id>
    </interactant>
    <interactant intactId="EBI-8468186">
        <id>Q8IZU1</id>
        <label>FAM9A</label>
    </interactant>
    <organismsDiffer>false</organismsDiffer>
    <experiments>3</experiments>
</comment>
<comment type="interaction">
    <interactant intactId="EBI-372412">
        <id>P11474</id>
    </interactant>
    <interactant intactId="EBI-447269">
        <id>Q16665</id>
        <label>HIF1A</label>
    </interactant>
    <organismsDiffer>false</organismsDiffer>
    <experiments>3</experiments>
</comment>
<comment type="interaction">
    <interactant intactId="EBI-372412">
        <id>P11474</id>
    </interactant>
    <interactant intactId="EBI-473160">
        <id>Q8N2W9</id>
        <label>PIAS4</label>
    </interactant>
    <organismsDiffer>false</organismsDiffer>
    <experiments>3</experiments>
</comment>
<comment type="interaction">
    <interactant intactId="EBI-372412">
        <id>P11474</id>
    </interactant>
    <interactant intactId="EBI-765486">
        <id>Q9UBK2</id>
        <label>PPARGC1A</label>
    </interactant>
    <organismsDiffer>false</organismsDiffer>
    <experiments>20</experiments>
</comment>
<comment type="interaction">
    <interactant intactId="EBI-372412">
        <id>P11474</id>
    </interactant>
    <interactant intactId="EBI-10829018">
        <id>Q04864-2</id>
        <label>REL</label>
    </interactant>
    <organismsDiffer>false</organismsDiffer>
    <experiments>3</experiments>
</comment>
<comment type="interaction">
    <interactant intactId="EBI-372412">
        <id>P11474</id>
    </interactant>
    <interactant intactId="EBI-2340927">
        <id>P78317</id>
        <label>RNF4</label>
    </interactant>
    <organismsDiffer>false</organismsDiffer>
    <experiments>3</experiments>
</comment>
<comment type="interaction">
    <interactant intactId="EBI-372412">
        <id>P11474</id>
    </interactant>
    <interactant intactId="EBI-7746394">
        <id>P48788</id>
        <label>TNNI2</label>
    </interactant>
    <organismsDiffer>false</organismsDiffer>
    <experiments>3</experiments>
</comment>
<comment type="subcellular location">
    <subcellularLocation>
        <location evidence="1 8 11">Nucleus</location>
    </subcellularLocation>
    <subcellularLocation>
        <location evidence="11">Cytoplasm</location>
    </subcellularLocation>
    <text evidence="11">Co-localizes to the cytoplasm only in presence of MAPK15.</text>
</comment>
<comment type="alternative products">
    <event type="alternative splicing"/>
    <isoform>
        <id>P11474-1</id>
        <name>1</name>
        <sequence type="displayed"/>
    </isoform>
    <isoform>
        <id>P11474-2</id>
        <name>2</name>
        <sequence type="described" ref="VSP_035756"/>
    </isoform>
</comment>
<comment type="induction">
    <text evidence="4">Induced by PGC1alpha in a number of specific cell types including heart, kidney and muscle.</text>
</comment>
<comment type="PTM">
    <text evidence="7 8">Phosphorylation on Ser-19 enhances sumoylation on Lys-14 increasing repression of transcriptional activity.</text>
</comment>
<comment type="PTM">
    <text evidence="7 8">Sumoylated with SUMO2. Main site is Lys-14 which is enhanced by phosphorylation on Ser-19, cofactor activation, and by interaction with PIAS4. Sumoylation enhances repression of transcriptional activity, but has no effect on subcellular location nor on DNA binding.</text>
</comment>
<comment type="PTM">
    <text evidence="10">Reversibly acetylated. Acetylation by PCAF/KAT2 at Lys-129, Lys-138, Lys-160 and Lys-162 and PCAF/KAT2 decreases transcriptional activity probably by inhibiting DNA-binding activity; deacetylation involves SIRT1 and HDAC8 and increases DNA-binding.</text>
</comment>
<comment type="similarity">
    <text evidence="15">Belongs to the nuclear hormone receptor family. NR3 subfamily.</text>
</comment>
<comment type="sequence caution" evidence="15">
    <conflict type="erroneous initiation">
        <sequence resource="EMBL-CDS" id="AAB17015"/>
    </conflict>
    <text>Extended N-terminus.</text>
</comment>
<comment type="sequence caution" evidence="15">
    <conflict type="frameshift">
        <sequence resource="EMBL-CDS" id="CAA35778"/>
    </conflict>
</comment>
<comment type="online information" name="Atlas of Genetics and Cytogenetics in Oncology and Haematology">
    <link uri="https://atlasgeneticsoncology.org/gene/44408/ESRRA"/>
</comment>
<keyword id="KW-0002">3D-structure</keyword>
<keyword id="KW-0007">Acetylation</keyword>
<keyword id="KW-0025">Alternative splicing</keyword>
<keyword id="KW-0963">Cytoplasm</keyword>
<keyword id="KW-0903">Direct protein sequencing</keyword>
<keyword id="KW-0238">DNA-binding</keyword>
<keyword id="KW-1017">Isopeptide bond</keyword>
<keyword id="KW-0479">Metal-binding</keyword>
<keyword id="KW-0539">Nucleus</keyword>
<keyword id="KW-0597">Phosphoprotein</keyword>
<keyword id="KW-1267">Proteomics identification</keyword>
<keyword id="KW-0675">Receptor</keyword>
<keyword id="KW-1185">Reference proteome</keyword>
<keyword id="KW-0804">Transcription</keyword>
<keyword id="KW-0805">Transcription regulation</keyword>
<keyword id="KW-0832">Ubl conjugation</keyword>
<keyword id="KW-0862">Zinc</keyword>
<keyword id="KW-0863">Zinc-finger</keyword>
<protein>
    <recommendedName>
        <fullName>Steroid hormone receptor ERR1</fullName>
    </recommendedName>
    <alternativeName>
        <fullName>Estrogen receptor-like 1</fullName>
    </alternativeName>
    <alternativeName>
        <fullName>Estrogen-related receptor alpha</fullName>
        <shortName>ERR-alpha</shortName>
    </alternativeName>
    <alternativeName>
        <fullName>Nuclear receptor subfamily 3 group B member 1</fullName>
    </alternativeName>
</protein>
<gene>
    <name type="primary">ESRRA</name>
    <name type="synonym">ERR1</name>
    <name type="synonym">ESRL1</name>
    <name type="synonym">NR3B1</name>
</gene>
<accession>P11474</accession>
<accession>Q14514</accession>
<sequence>MSSQVVGIEPLYIKAEPASPDSPKGSSETETEPPVALAPGPAPTRCLPGHKEEEDGEGAGPGEQGGGKLVLSSLPKRLCLVCGDVASGYHYGVASCEACKAFFKRTIQGSIEYSCPASNECEITKRRRKACQACRFTKCLRVGMLKEGVRLDRVRGGRQKYKRRPEVDPLPFPGPFPAGPLAVAGGPRKTAAPVNALVSHLLVVEPEKLYAMPDPAGPDGHLPAVATLCDLFDREIVVTISWAKSIPGFSSLSLSDQMSVLQSVWMEVLVLGVAQRSLPLQDELAFAEDLVLDEEGARAAGLGELGAALLQLVRRLQALRLEREEYVLLKALALANSDSVHIEDAEAVEQLREALHEALLEYEAGRAGPGGGAERRRAGRLLLTLPLLRQTAGKVLAHFYGVKLEGKVPMHKLFLEMLEAMMD</sequence>
<reference key="1">
    <citation type="journal article" date="1988" name="Nature">
        <title>Identification of a new class of steroid hormone receptors.</title>
        <authorList>
            <person name="Giguere V."/>
            <person name="Yang N."/>
            <person name="Segui P."/>
            <person name="Evans R.M."/>
        </authorList>
    </citation>
    <scope>NUCLEOTIDE SEQUENCE [MRNA] (ISOFORM 1)</scope>
    <source>
        <tissue>Kidney</tissue>
    </source>
</reference>
<reference key="2">
    <citation type="journal article" date="1996" name="J. Biol. Chem.">
        <title>Estrogen-related receptor, hERR1, modulates estrogen receptor-mediated response of human lactoferrin gene promoter.</title>
        <authorList>
            <person name="Yang N."/>
            <person name="Shigeta H."/>
            <person name="Shi H."/>
            <person name="Teng C.T."/>
        </authorList>
    </citation>
    <scope>NUCLEOTIDE SEQUENCE [MRNA] (ISOFORM 2)</scope>
    <source>
        <tissue>Uterus</tissue>
    </source>
</reference>
<reference key="3">
    <citation type="journal article" date="2006" name="Nature">
        <title>Human chromosome 11 DNA sequence and analysis including novel gene identification.</title>
        <authorList>
            <person name="Taylor T.D."/>
            <person name="Noguchi H."/>
            <person name="Totoki Y."/>
            <person name="Toyoda A."/>
            <person name="Kuroki Y."/>
            <person name="Dewar K."/>
            <person name="Lloyd C."/>
            <person name="Itoh T."/>
            <person name="Takeda T."/>
            <person name="Kim D.-W."/>
            <person name="She X."/>
            <person name="Barlow K.F."/>
            <person name="Bloom T."/>
            <person name="Bruford E."/>
            <person name="Chang J.L."/>
            <person name="Cuomo C.A."/>
            <person name="Eichler E."/>
            <person name="FitzGerald M.G."/>
            <person name="Jaffe D.B."/>
            <person name="LaButti K."/>
            <person name="Nicol R."/>
            <person name="Park H.-S."/>
            <person name="Seaman C."/>
            <person name="Sougnez C."/>
            <person name="Yang X."/>
            <person name="Zimmer A.R."/>
            <person name="Zody M.C."/>
            <person name="Birren B.W."/>
            <person name="Nusbaum C."/>
            <person name="Fujiyama A."/>
            <person name="Hattori M."/>
            <person name="Rogers J."/>
            <person name="Lander E.S."/>
            <person name="Sakaki Y."/>
        </authorList>
    </citation>
    <scope>NUCLEOTIDE SEQUENCE [LARGE SCALE GENOMIC DNA]</scope>
</reference>
<reference key="4">
    <citation type="journal article" date="1993" name="Genes Dev.">
        <title>SV40 early-to-late switch involves titration of cellular transcriptional repressors.</title>
        <authorList>
            <person name="Wiley S.R."/>
            <person name="Kraus R.J."/>
            <person name="Zuo F."/>
            <person name="Murray E.E."/>
            <person name="Loritz K."/>
            <person name="Mertz J.E."/>
        </authorList>
    </citation>
    <scope>PROTEIN SEQUENCE OF 69-76</scope>
</reference>
<reference key="5">
    <citation type="journal article" date="1997" name="Mol. Cell. Biol.">
        <title>The orphan nuclear receptor estrogen-related receptor alpha is a transcriptional regulator of the human medium-chain acyl coenzyme A dehydrogenase gene.</title>
        <authorList>
            <person name="Sladek R."/>
            <person name="Bader J.-A."/>
            <person name="Giguere V."/>
        </authorList>
    </citation>
    <scope>FUNCTION</scope>
</reference>
<reference key="6">
    <citation type="journal article" date="2003" name="J. Biol. Chem.">
        <title>The transcriptional coactivator PGC-1 regulates the expression and activity of the orphan nuclear receptor estrogen-related receptor alpha (ERRalpha).</title>
        <authorList>
            <person name="Schreiber S.N."/>
            <person name="Knutti D."/>
            <person name="Brogli K."/>
            <person name="Uhlmann T."/>
            <person name="Kralli A."/>
        </authorList>
    </citation>
    <scope>INTERACTION WITH PPARGC1A</scope>
    <scope>INDUCTION</scope>
    <scope>FUNCTION</scope>
</reference>
<reference key="7">
    <citation type="journal article" date="2006" name="Mol. Endocrinol.">
        <title>A single nucleotide in an estrogen-related receptor alpha site can dictate mode of binding and peroxisome proliferator-activated receptor gamma coactivator 1alpha activation of target promoters.</title>
        <authorList>
            <person name="Barry J.B."/>
            <person name="Laganiere J."/>
            <person name="Giguere V."/>
        </authorList>
    </citation>
    <scope>DNA-BINDING SPECIFICITY</scope>
    <scope>INTERACTION WITH PPARGC1A</scope>
    <scope>HOMODIMERIZATION</scope>
    <scope>FUNCTION</scope>
    <scope>MUTAGENESIS OF SER-118 AND THR-124</scope>
</reference>
<reference key="8">
    <citation type="journal article" date="2007" name="Biochemistry">
        <title>Phosphorylation-dependent sumoylation of estrogen-related receptor alpha1.</title>
        <authorList>
            <person name="Vu E.H."/>
            <person name="Kraus R.J."/>
            <person name="Mertz J.E."/>
        </authorList>
    </citation>
    <scope>SUMOYLATION AT LYS-14 AND LYS-403</scope>
    <scope>PHOSPHORYLATION AT SER-19 AND SER-22</scope>
    <scope>FUNCTION</scope>
    <scope>MUTAGENESIS OF LYS-14; SER-19; SER-22; LYS-403; LEU-413 AND LEU-418</scope>
</reference>
<reference key="9">
    <citation type="journal article" date="2008" name="Mol. Endocrinol.">
        <title>Phosphorylation-dependent sumoylation regulates estrogen-related receptor-alpha and -gamma transcriptional activity through a synergy control motif.</title>
        <authorList>
            <person name="Tremblay A.M."/>
            <person name="Wilson B.J."/>
            <person name="Yang X.-J."/>
            <person name="Giguere V."/>
        </authorList>
    </citation>
    <scope>SUMOYLATION AT LYS-14 AND LYS-403</scope>
    <scope>PHOSPHORYLATION AT SER-19 AND SER-22</scope>
    <scope>INTERACTION WITH PIAS4</scope>
    <scope>FUNCTION</scope>
    <scope>SUBCELLULAR LOCATION</scope>
    <scope>MUTAGENESIS OF LYS-14; SER-19; SER-22 AND LYS-403</scope>
</reference>
<reference key="10">
    <citation type="journal article" date="2008" name="Proc. Natl. Acad. Sci. U.S.A.">
        <title>A quantitative atlas of mitotic phosphorylation.</title>
        <authorList>
            <person name="Dephoure N."/>
            <person name="Zhou C."/>
            <person name="Villen J."/>
            <person name="Beausoleil S.A."/>
            <person name="Bakalarski C.E."/>
            <person name="Elledge S.J."/>
            <person name="Gygi S.P."/>
        </authorList>
    </citation>
    <scope>PHOSPHORYLATION [LARGE SCALE ANALYSIS] AT SER-19 AND SER-22</scope>
    <scope>IDENTIFICATION BY MASS SPECTROMETRY [LARGE SCALE ANALYSIS]</scope>
    <source>
        <tissue>Cervix carcinoma</tissue>
    </source>
</reference>
<reference key="11">
    <citation type="journal article" date="2010" name="Mol. Endocrinol.">
        <title>An acetylation switch modulates the transcriptional activity of estrogen-related receptor alpha.</title>
        <authorList>
            <person name="Wilson B.J."/>
            <person name="Tremblay A.M."/>
            <person name="Deblois G."/>
            <person name="Sylvain-Drolet G."/>
            <person name="Giguere V."/>
        </authorList>
    </citation>
    <scope>ACETYLATION AT LYS-129; LYS-138; LYS-160 AND LYS-162 BY PCAF/KAT2B</scope>
    <scope>MUTAGENESIS OF LYS-129; LYS-138; LYS-160 AND LYS-162</scope>
    <scope>DEACETYLATION BY SIRT1 AND HDAC8</scope>
</reference>
<reference key="12">
    <citation type="journal article" date="2011" name="J. Biol. Chem.">
        <title>Extracellular signal-regulated kinase 8 (ERK8) controls estrogen-related receptor alpha (ERRalpha) cellular localization and inhibits its transcriptional activity.</title>
        <authorList>
            <person name="Rossi M."/>
            <person name="Colecchia D."/>
            <person name="Iavarone C."/>
            <person name="Strambi A."/>
            <person name="Piccioni F."/>
            <person name="Verrotti di Pianella A."/>
            <person name="Chiariello M."/>
        </authorList>
    </citation>
    <scope>INTERACTION WITH MAPK15</scope>
    <scope>SUBCELLULAR LOCATION</scope>
</reference>
<reference key="13">
    <citation type="journal article" date="2013" name="J. Biol. Chem.">
        <title>Peroxisome proliferator-activated receptor gamma coactivator 1 (PGC-1)- and estrogen-related receptor (ERR)-induced regulator in muscle 1 (Perm1) is a tissue-specific regulator of oxidative capacity in skeletal muscle cells.</title>
        <authorList>
            <person name="Cho Y."/>
            <person name="Hazen B.C."/>
            <person name="Russell A.P."/>
            <person name="Kralli A."/>
        </authorList>
    </citation>
    <scope>FUNCTION</scope>
</reference>
<reference key="14">
    <citation type="journal article" date="2015" name="Cell Rep.">
        <title>SUMO-2 orchestrates chromatin modifiers in response to DNA damage.</title>
        <authorList>
            <person name="Hendriks I.A."/>
            <person name="Treffers L.W."/>
            <person name="Verlaan-de Vries M."/>
            <person name="Olsen J.V."/>
            <person name="Vertegaal A.C."/>
        </authorList>
    </citation>
    <scope>SUMOYLATION [LARGE SCALE ANALYSIS] AT LYS-189 AND LYS-403</scope>
    <scope>IDENTIFICATION BY MASS SPECTROMETRY [LARGE SCALE ANALYSIS]</scope>
</reference>
<reference key="15">
    <citation type="journal article" date="2015" name="Mol. Cell. Proteomics">
        <title>System-wide analysis of SUMOylation dynamics in response to replication stress reveals novel small ubiquitin-like modified target proteins and acceptor lysines relevant for genome stability.</title>
        <authorList>
            <person name="Xiao Z."/>
            <person name="Chang J.G."/>
            <person name="Hendriks I.A."/>
            <person name="Sigurdsson J.O."/>
            <person name="Olsen J.V."/>
            <person name="Vertegaal A.C."/>
        </authorList>
    </citation>
    <scope>SUMOYLATION [LARGE SCALE ANALYSIS] AT LYS-403</scope>
    <scope>IDENTIFICATION BY MASS SPECTROMETRY [LARGE SCALE ANALYSIS]</scope>
</reference>
<reference key="16">
    <citation type="journal article" date="2017" name="Nat. Struct. Mol. Biol.">
        <title>Site-specific mapping of the human SUMO proteome reveals co-modification with phosphorylation.</title>
        <authorList>
            <person name="Hendriks I.A."/>
            <person name="Lyon D."/>
            <person name="Young C."/>
            <person name="Jensen L.J."/>
            <person name="Vertegaal A.C."/>
            <person name="Nielsen M.L."/>
        </authorList>
    </citation>
    <scope>SUMOYLATION [LARGE SCALE ANALYSIS] AT LYS-189 AND LYS-403</scope>
    <scope>IDENTIFICATION BY MASS SPECTROMETRY [LARGE SCALE ANALYSIS]</scope>
</reference>
<reference key="17">
    <citation type="journal article" date="2004" name="J. Biol. Chem.">
        <title>Evidence for ligand-independent transcriptional activation of the human estrogen-related receptor alpha (ERRalpha): crystal structure of ERRalpha ligand binding domain in complex with peroxisome proliferator-activated receptor coactivator-1alpha.</title>
        <authorList>
            <person name="Kallen J."/>
            <person name="Schlaeppi J.-M."/>
            <person name="Bitsch F."/>
            <person name="Filipuzzi I."/>
            <person name="Schilb A."/>
            <person name="Riou V."/>
            <person name="Graham A."/>
            <person name="Strauss A."/>
            <person name="Geiser M."/>
            <person name="Fournier B."/>
        </authorList>
    </citation>
    <scope>X-RAY CRYSTALLOGRAPHY (2.5 ANGSTROMS) OF 193-423 IN COMPLEX WITH THE L3 SITE-CONTAINING PEPTIDE OF COACTIVATOR PPARGC1A</scope>
    <scope>HOMODIMERIZATION</scope>
    <scope>IDENTIFICATION BY MASS SPECTROMETRY</scope>
</reference>
<reference key="18">
    <citation type="journal article" date="2008" name="J. Biol. Chem.">
        <title>Communication between the ERRalpha homodimer interface and the PGC-1alpha binding surface via the helix 8-9 loop.</title>
        <authorList>
            <person name="Greschik H."/>
            <person name="Althage M."/>
            <person name="Flaig R."/>
            <person name="Sato Y."/>
            <person name="Chavant V."/>
            <person name="Peluso-Iltis C."/>
            <person name="Choulier L."/>
            <person name="Cronet P."/>
            <person name="Rochel N."/>
            <person name="Schuele R."/>
            <person name="Stroemstedt P.E."/>
            <person name="Moras D."/>
        </authorList>
    </citation>
    <scope>X-RAY CRYSTALLOGRAPHY (2.11 ANGSTROMS) OF 180-423 IN COMPLEX WITH THE L3 SITE-CONTAINING PEPTIDE OF COACTIVATOR PPARGC1A</scope>
    <scope>INTERACTION WITH PPARGC1A</scope>
    <scope>MUTAGENESIS OF 258-MET--GLN-262; SER-259; ARG-315; ASP-338; HIS-341; GLU-343 AND 421-MET--ASP-423</scope>
</reference>
<evidence type="ECO:0000255" key="1">
    <source>
        <dbReference type="PROSITE-ProRule" id="PRU00407"/>
    </source>
</evidence>
<evidence type="ECO:0000255" key="2">
    <source>
        <dbReference type="PROSITE-ProRule" id="PRU01189"/>
    </source>
</evidence>
<evidence type="ECO:0000256" key="3">
    <source>
        <dbReference type="SAM" id="MobiDB-lite"/>
    </source>
</evidence>
<evidence type="ECO:0000269" key="4">
    <source>
    </source>
</evidence>
<evidence type="ECO:0000269" key="5">
    <source>
    </source>
</evidence>
<evidence type="ECO:0000269" key="6">
    <source>
    </source>
</evidence>
<evidence type="ECO:0000269" key="7">
    <source>
    </source>
</evidence>
<evidence type="ECO:0000269" key="8">
    <source>
    </source>
</evidence>
<evidence type="ECO:0000269" key="9">
    <source>
    </source>
</evidence>
<evidence type="ECO:0000269" key="10">
    <source>
    </source>
</evidence>
<evidence type="ECO:0000269" key="11">
    <source>
    </source>
</evidence>
<evidence type="ECO:0000269" key="12">
    <source>
    </source>
</evidence>
<evidence type="ECO:0000269" key="13">
    <source>
    </source>
</evidence>
<evidence type="ECO:0000303" key="14">
    <source>
    </source>
</evidence>
<evidence type="ECO:0000305" key="15"/>
<evidence type="ECO:0007744" key="16">
    <source>
    </source>
</evidence>
<evidence type="ECO:0007744" key="17">
    <source>
    </source>
</evidence>
<evidence type="ECO:0007744" key="18">
    <source>
    </source>
</evidence>
<evidence type="ECO:0007744" key="19">
    <source>
    </source>
</evidence>
<evidence type="ECO:0007829" key="20">
    <source>
        <dbReference type="PDB" id="2PJL"/>
    </source>
</evidence>
<evidence type="ECO:0007829" key="21">
    <source>
        <dbReference type="PDB" id="3K6P"/>
    </source>
</evidence>
<proteinExistence type="evidence at protein level"/>